<organism>
    <name type="scientific">Proteus mirabilis (strain HI4320)</name>
    <dbReference type="NCBI Taxonomy" id="529507"/>
    <lineage>
        <taxon>Bacteria</taxon>
        <taxon>Pseudomonadati</taxon>
        <taxon>Pseudomonadota</taxon>
        <taxon>Gammaproteobacteria</taxon>
        <taxon>Enterobacterales</taxon>
        <taxon>Morganellaceae</taxon>
        <taxon>Proteus</taxon>
    </lineage>
</organism>
<protein>
    <recommendedName>
        <fullName evidence="1">Bifunctional polymyxin resistance protein ArnA</fullName>
    </recommendedName>
    <domain>
        <recommendedName>
            <fullName evidence="1">UDP-4-amino-4-deoxy-L-arabinose formyltransferase</fullName>
            <ecNumber evidence="1">2.1.2.13</ecNumber>
        </recommendedName>
        <alternativeName>
            <fullName evidence="1">ArnAFT</fullName>
        </alternativeName>
        <alternativeName>
            <fullName evidence="1">UDP-L-Ara4N formyltransferase</fullName>
        </alternativeName>
    </domain>
    <domain>
        <recommendedName>
            <fullName evidence="1">UDP-glucuronic acid oxidase, UDP-4-keto-hexauronic acid decarboxylating</fullName>
            <ecNumber evidence="1">1.1.1.305</ecNumber>
        </recommendedName>
        <alternativeName>
            <fullName evidence="1">ArnADH</fullName>
        </alternativeName>
        <alternativeName>
            <fullName evidence="1">UDP-GlcUA decarboxylase</fullName>
        </alternativeName>
        <alternativeName>
            <fullName evidence="1">UDP-glucuronic acid dehydrogenase</fullName>
        </alternativeName>
    </domain>
</protein>
<evidence type="ECO:0000255" key="1">
    <source>
        <dbReference type="HAMAP-Rule" id="MF_01166"/>
    </source>
</evidence>
<gene>
    <name evidence="1" type="primary">arnA</name>
    <name type="ordered locus">PMI1045</name>
</gene>
<name>ARNA_PROMH</name>
<comment type="function">
    <text evidence="1">Bifunctional enzyme that catalyzes the oxidative decarboxylation of UDP-glucuronic acid (UDP-GlcUA) to UDP-4-keto-arabinose (UDP-Ara4O) and the addition of a formyl group to UDP-4-amino-4-deoxy-L-arabinose (UDP-L-Ara4N) to form UDP-L-4-formamido-arabinose (UDP-L-Ara4FN). The modified arabinose is attached to lipid A and is required for resistance to polymyxin and cationic antimicrobial peptides.</text>
</comment>
<comment type="catalytic activity">
    <reaction evidence="1">
        <text>UDP-alpha-D-glucuronate + NAD(+) = UDP-beta-L-threo-pentopyranos-4-ulose + CO2 + NADH</text>
        <dbReference type="Rhea" id="RHEA:24702"/>
        <dbReference type="ChEBI" id="CHEBI:16526"/>
        <dbReference type="ChEBI" id="CHEBI:57540"/>
        <dbReference type="ChEBI" id="CHEBI:57945"/>
        <dbReference type="ChEBI" id="CHEBI:58052"/>
        <dbReference type="ChEBI" id="CHEBI:58710"/>
        <dbReference type="EC" id="1.1.1.305"/>
    </reaction>
</comment>
<comment type="catalytic activity">
    <reaction evidence="1">
        <text>UDP-4-amino-4-deoxy-beta-L-arabinose + (6R)-10-formyltetrahydrofolate = UDP-4-deoxy-4-formamido-beta-L-arabinose + (6S)-5,6,7,8-tetrahydrofolate + H(+)</text>
        <dbReference type="Rhea" id="RHEA:24706"/>
        <dbReference type="ChEBI" id="CHEBI:15378"/>
        <dbReference type="ChEBI" id="CHEBI:57453"/>
        <dbReference type="ChEBI" id="CHEBI:58708"/>
        <dbReference type="ChEBI" id="CHEBI:58709"/>
        <dbReference type="ChEBI" id="CHEBI:195366"/>
        <dbReference type="EC" id="2.1.2.13"/>
    </reaction>
</comment>
<comment type="pathway">
    <text evidence="1">Nucleotide-sugar biosynthesis; UDP-4-deoxy-4-formamido-beta-L-arabinose biosynthesis; UDP-4-deoxy-4-formamido-beta-L-arabinose from UDP-alpha-D-glucuronate: step 1/3.</text>
</comment>
<comment type="pathway">
    <text evidence="1">Nucleotide-sugar biosynthesis; UDP-4-deoxy-4-formamido-beta-L-arabinose biosynthesis; UDP-4-deoxy-4-formamido-beta-L-arabinose from UDP-alpha-D-glucuronate: step 3/3.</text>
</comment>
<comment type="pathway">
    <text evidence="1">Bacterial outer membrane biogenesis; lipopolysaccharide biosynthesis.</text>
</comment>
<comment type="subunit">
    <text evidence="1">Homohexamer, formed by a dimer of trimers.</text>
</comment>
<comment type="similarity">
    <text evidence="1">In the N-terminal section; belongs to the Fmt family. UDP-L-Ara4N formyltransferase subfamily.</text>
</comment>
<comment type="similarity">
    <text evidence="1">In the C-terminal section; belongs to the NAD(P)-dependent epimerase/dehydratase family. UDP-glucuronic acid decarboxylase subfamily.</text>
</comment>
<reference key="1">
    <citation type="journal article" date="2008" name="J. Bacteriol.">
        <title>Complete genome sequence of uropathogenic Proteus mirabilis, a master of both adherence and motility.</title>
        <authorList>
            <person name="Pearson M.M."/>
            <person name="Sebaihia M."/>
            <person name="Churcher C."/>
            <person name="Quail M.A."/>
            <person name="Seshasayee A.S."/>
            <person name="Luscombe N.M."/>
            <person name="Abdellah Z."/>
            <person name="Arrosmith C."/>
            <person name="Atkin B."/>
            <person name="Chillingworth T."/>
            <person name="Hauser H."/>
            <person name="Jagels K."/>
            <person name="Moule S."/>
            <person name="Mungall K."/>
            <person name="Norbertczak H."/>
            <person name="Rabbinowitsch E."/>
            <person name="Walker D."/>
            <person name="Whithead S."/>
            <person name="Thomson N.R."/>
            <person name="Rather P.N."/>
            <person name="Parkhill J."/>
            <person name="Mobley H.L.T."/>
        </authorList>
    </citation>
    <scope>NUCLEOTIDE SEQUENCE [LARGE SCALE GENOMIC DNA]</scope>
    <source>
        <strain>HI4320</strain>
    </source>
</reference>
<sequence>MKAIVFAYHDIGCVGLKALEKAGFDIQAVFTHTDDPNENHFFSSVARVSAEMGLTVFAPENVNHPLWIERIREMKPDVIFSFYYRHMLSDEILNLAPKGAFNLHGSLLPKYRGRAPINWAIVNGETETGVTLHKMTAKADAGDIVAQEKVTIEDTDTSLILHEKVREAAAKLMAHTLPHIASGNYSTTAQDESQATYYGRRCADDGLIDWNADAKTVHNLVRAVTEPYPGAFTFLGERKMIIWRARPVADNQGKRPGTVISTEPLVIACAKGAIEVITGQSENGLYVQGSRLATEMGIVTDVRVGPKATAQVKRRQRVLILGVNGFIGNHLTERLLKDGNYDIYGMDIGSSAIERFIGNPRFHFIEGDVSIHTEWIEYHIKKCDVILPLVAIATPIEYTRNPLRVFELDFEENLKIVRYCVKYNKRIIFPSTSEVYGMCDDKEFDEDNSRLIVGPINKQRWIYSVSKQLLDRVIWAYGAKEGLKFTLFRPFNWMGPRLDNLNSARIGSSRAITQLILNLVEGSPIKLVDGGEQKRCFTDINDGIEALFRIIENRDNKCDGQIINIGNPTNEASIRELAEMLLDCFEKHELRGHFPPFAGFKKIESSSYYGKGYQDVEHRKPSIKNAERLLDWKPTIETRQTVEETLDFFLRGAVEELGNK</sequence>
<keyword id="KW-0046">Antibiotic resistance</keyword>
<keyword id="KW-0441">Lipid A biosynthesis</keyword>
<keyword id="KW-0444">Lipid biosynthesis</keyword>
<keyword id="KW-0443">Lipid metabolism</keyword>
<keyword id="KW-0448">Lipopolysaccharide biosynthesis</keyword>
<keyword id="KW-0511">Multifunctional enzyme</keyword>
<keyword id="KW-0520">NAD</keyword>
<keyword id="KW-0560">Oxidoreductase</keyword>
<keyword id="KW-1185">Reference proteome</keyword>
<keyword id="KW-0808">Transferase</keyword>
<proteinExistence type="inferred from homology"/>
<dbReference type="EC" id="2.1.2.13" evidence="1"/>
<dbReference type="EC" id="1.1.1.305" evidence="1"/>
<dbReference type="EMBL" id="AM942759">
    <property type="protein sequence ID" value="CAR42271.1"/>
    <property type="molecule type" value="Genomic_DNA"/>
</dbReference>
<dbReference type="RefSeq" id="WP_004242621.1">
    <property type="nucleotide sequence ID" value="NC_010554.1"/>
</dbReference>
<dbReference type="SMR" id="B4ETL7"/>
<dbReference type="EnsemblBacteria" id="CAR42271">
    <property type="protein sequence ID" value="CAR42271"/>
    <property type="gene ID" value="PMI1045"/>
</dbReference>
<dbReference type="GeneID" id="6800077"/>
<dbReference type="KEGG" id="pmr:PMI1045"/>
<dbReference type="eggNOG" id="COG0223">
    <property type="taxonomic scope" value="Bacteria"/>
</dbReference>
<dbReference type="eggNOG" id="COG0451">
    <property type="taxonomic scope" value="Bacteria"/>
</dbReference>
<dbReference type="HOGENOM" id="CLU_007383_23_2_6"/>
<dbReference type="UniPathway" id="UPA00030"/>
<dbReference type="UniPathway" id="UPA00032">
    <property type="reaction ID" value="UER00492"/>
</dbReference>
<dbReference type="UniPathway" id="UPA00032">
    <property type="reaction ID" value="UER00494"/>
</dbReference>
<dbReference type="Proteomes" id="UP000008319">
    <property type="component" value="Chromosome"/>
</dbReference>
<dbReference type="GO" id="GO:0016020">
    <property type="term" value="C:membrane"/>
    <property type="evidence" value="ECO:0007669"/>
    <property type="project" value="GOC"/>
</dbReference>
<dbReference type="GO" id="GO:0016831">
    <property type="term" value="F:carboxy-lyase activity"/>
    <property type="evidence" value="ECO:0007669"/>
    <property type="project" value="InterPro"/>
</dbReference>
<dbReference type="GO" id="GO:0099619">
    <property type="term" value="F:UDP-4-amino-4-deoxy-L-arabinose formyltransferase activity"/>
    <property type="evidence" value="ECO:0007669"/>
    <property type="project" value="UniProtKB-EC"/>
</dbReference>
<dbReference type="GO" id="GO:0099618">
    <property type="term" value="F:UDP-glucuronate dehydrogenase activity"/>
    <property type="evidence" value="ECO:0007669"/>
    <property type="project" value="UniProtKB-EC"/>
</dbReference>
<dbReference type="GO" id="GO:0009245">
    <property type="term" value="P:lipid A biosynthetic process"/>
    <property type="evidence" value="ECO:0007669"/>
    <property type="project" value="UniProtKB-KW"/>
</dbReference>
<dbReference type="GO" id="GO:0009103">
    <property type="term" value="P:lipopolysaccharide biosynthetic process"/>
    <property type="evidence" value="ECO:0007669"/>
    <property type="project" value="UniProtKB-UniRule"/>
</dbReference>
<dbReference type="GO" id="GO:0046677">
    <property type="term" value="P:response to antibiotic"/>
    <property type="evidence" value="ECO:0007669"/>
    <property type="project" value="UniProtKB-KW"/>
</dbReference>
<dbReference type="CDD" id="cd08702">
    <property type="entry name" value="Arna_FMT_C"/>
    <property type="match status" value="1"/>
</dbReference>
<dbReference type="CDD" id="cd05257">
    <property type="entry name" value="Arna_like_SDR_e"/>
    <property type="match status" value="1"/>
</dbReference>
<dbReference type="FunFam" id="3.40.50.720:FF:000197">
    <property type="entry name" value="Bifunctional polymyxin resistance protein ArnA"/>
    <property type="match status" value="1"/>
</dbReference>
<dbReference type="Gene3D" id="3.40.50.12230">
    <property type="match status" value="1"/>
</dbReference>
<dbReference type="Gene3D" id="3.40.50.720">
    <property type="entry name" value="NAD(P)-binding Rossmann-like Domain"/>
    <property type="match status" value="1"/>
</dbReference>
<dbReference type="HAMAP" id="MF_01166">
    <property type="entry name" value="ArnA"/>
    <property type="match status" value="1"/>
</dbReference>
<dbReference type="InterPro" id="IPR045869">
    <property type="entry name" value="Arna-like_SDR_e"/>
</dbReference>
<dbReference type="InterPro" id="IPR021168">
    <property type="entry name" value="Bifun_polymyxin_resist_ArnA"/>
</dbReference>
<dbReference type="InterPro" id="IPR001509">
    <property type="entry name" value="Epimerase_deHydtase"/>
</dbReference>
<dbReference type="InterPro" id="IPR005793">
    <property type="entry name" value="Formyl_trans_C"/>
</dbReference>
<dbReference type="InterPro" id="IPR002376">
    <property type="entry name" value="Formyl_transf_N"/>
</dbReference>
<dbReference type="InterPro" id="IPR036477">
    <property type="entry name" value="Formyl_transf_N_sf"/>
</dbReference>
<dbReference type="InterPro" id="IPR011034">
    <property type="entry name" value="Formyl_transferase-like_C_sf"/>
</dbReference>
<dbReference type="InterPro" id="IPR050177">
    <property type="entry name" value="Lipid_A_modif_metabolic_enz"/>
</dbReference>
<dbReference type="InterPro" id="IPR036291">
    <property type="entry name" value="NAD(P)-bd_dom_sf"/>
</dbReference>
<dbReference type="NCBIfam" id="NF005414">
    <property type="entry name" value="PRK06988.1"/>
    <property type="match status" value="1"/>
</dbReference>
<dbReference type="NCBIfam" id="NF005998">
    <property type="entry name" value="PRK08125.1"/>
    <property type="match status" value="1"/>
</dbReference>
<dbReference type="NCBIfam" id="NF008872">
    <property type="entry name" value="PRK11908.1"/>
    <property type="match status" value="1"/>
</dbReference>
<dbReference type="PANTHER" id="PTHR43245">
    <property type="entry name" value="BIFUNCTIONAL POLYMYXIN RESISTANCE PROTEIN ARNA"/>
    <property type="match status" value="1"/>
</dbReference>
<dbReference type="PANTHER" id="PTHR43245:SF13">
    <property type="entry name" value="UDP-D-APIOSE_UDP-D-XYLOSE SYNTHASE 2"/>
    <property type="match status" value="1"/>
</dbReference>
<dbReference type="Pfam" id="PF01370">
    <property type="entry name" value="Epimerase"/>
    <property type="match status" value="1"/>
</dbReference>
<dbReference type="Pfam" id="PF02911">
    <property type="entry name" value="Formyl_trans_C"/>
    <property type="match status" value="1"/>
</dbReference>
<dbReference type="Pfam" id="PF00551">
    <property type="entry name" value="Formyl_trans_N"/>
    <property type="match status" value="1"/>
</dbReference>
<dbReference type="PIRSF" id="PIRSF036506">
    <property type="entry name" value="Bifun_polymyxin_resist_ArnA"/>
    <property type="match status" value="1"/>
</dbReference>
<dbReference type="SUPFAM" id="SSF50486">
    <property type="entry name" value="FMT C-terminal domain-like"/>
    <property type="match status" value="1"/>
</dbReference>
<dbReference type="SUPFAM" id="SSF53328">
    <property type="entry name" value="Formyltransferase"/>
    <property type="match status" value="1"/>
</dbReference>
<dbReference type="SUPFAM" id="SSF51735">
    <property type="entry name" value="NAD(P)-binding Rossmann-fold domains"/>
    <property type="match status" value="1"/>
</dbReference>
<accession>B4ETL7</accession>
<feature type="chain" id="PRO_0000379988" description="Bifunctional polymyxin resistance protein ArnA">
    <location>
        <begin position="1"/>
        <end position="660"/>
    </location>
</feature>
<feature type="region of interest" description="Formyltransferase ArnAFT">
    <location>
        <begin position="1"/>
        <end position="304"/>
    </location>
</feature>
<feature type="region of interest" description="Dehydrogenase ArnADH">
    <location>
        <begin position="314"/>
        <end position="660"/>
    </location>
</feature>
<feature type="active site" description="Proton donor; for formyltransferase activity" evidence="1">
    <location>
        <position position="104"/>
    </location>
</feature>
<feature type="active site" description="Proton acceptor; for decarboxylase activity" evidence="1">
    <location>
        <position position="434"/>
    </location>
</feature>
<feature type="active site" description="Proton donor; for decarboxylase activity" evidence="1">
    <location>
        <position position="619"/>
    </location>
</feature>
<feature type="binding site" evidence="1">
    <location>
        <position position="114"/>
    </location>
    <ligand>
        <name>(6R)-10-formyltetrahydrofolate</name>
        <dbReference type="ChEBI" id="CHEBI:195366"/>
    </ligand>
</feature>
<feature type="binding site" evidence="1">
    <location>
        <begin position="136"/>
        <end position="140"/>
    </location>
    <ligand>
        <name>(6R)-10-formyltetrahydrofolate</name>
        <dbReference type="ChEBI" id="CHEBI:195366"/>
    </ligand>
</feature>
<feature type="binding site" evidence="1">
    <location>
        <position position="347"/>
    </location>
    <ligand>
        <name>NAD(+)</name>
        <dbReference type="ChEBI" id="CHEBI:57540"/>
    </ligand>
</feature>
<feature type="binding site" evidence="1">
    <location>
        <begin position="368"/>
        <end position="369"/>
    </location>
    <ligand>
        <name>NAD(+)</name>
        <dbReference type="ChEBI" id="CHEBI:57540"/>
    </ligand>
</feature>
<feature type="binding site" evidence="1">
    <location>
        <position position="393"/>
    </location>
    <ligand>
        <name>UDP-alpha-D-glucuronate</name>
        <dbReference type="ChEBI" id="CHEBI:58052"/>
    </ligand>
</feature>
<feature type="binding site" evidence="1">
    <location>
        <position position="398"/>
    </location>
    <ligand>
        <name>UDP-alpha-D-glucuronate</name>
        <dbReference type="ChEBI" id="CHEBI:58052"/>
    </ligand>
</feature>
<feature type="binding site" evidence="1">
    <location>
        <begin position="432"/>
        <end position="433"/>
    </location>
    <ligand>
        <name>UDP-alpha-D-glucuronate</name>
        <dbReference type="ChEBI" id="CHEBI:58052"/>
    </ligand>
</feature>
<feature type="binding site" evidence="1">
    <location>
        <position position="460"/>
    </location>
    <ligand>
        <name>UDP-alpha-D-glucuronate</name>
        <dbReference type="ChEBI" id="CHEBI:58052"/>
    </ligand>
</feature>
<feature type="binding site" evidence="1">
    <location>
        <position position="492"/>
    </location>
    <ligand>
        <name>UDP-alpha-D-glucuronate</name>
        <dbReference type="ChEBI" id="CHEBI:58052"/>
    </ligand>
</feature>
<feature type="binding site" evidence="1">
    <location>
        <begin position="526"/>
        <end position="535"/>
    </location>
    <ligand>
        <name>UDP-alpha-D-glucuronate</name>
        <dbReference type="ChEBI" id="CHEBI:58052"/>
    </ligand>
</feature>
<feature type="binding site" evidence="1">
    <location>
        <position position="613"/>
    </location>
    <ligand>
        <name>UDP-alpha-D-glucuronate</name>
        <dbReference type="ChEBI" id="CHEBI:58052"/>
    </ligand>
</feature>
<feature type="site" description="Transition state stabilizer" evidence="1">
    <location>
        <position position="102"/>
    </location>
</feature>
<feature type="site" description="Raises pKa of active site His" evidence="1">
    <location>
        <position position="140"/>
    </location>
</feature>